<comment type="similarity">
    <text evidence="1">Belongs to the bacterial ribosomal protein bL35 family.</text>
</comment>
<protein>
    <recommendedName>
        <fullName evidence="1">Large ribosomal subunit protein bL35</fullName>
    </recommendedName>
    <alternativeName>
        <fullName evidence="3">50S ribosomal protein L35</fullName>
    </alternativeName>
</protein>
<gene>
    <name evidence="1" type="primary">rpmI</name>
    <name type="ordered locus">SPG_0884</name>
</gene>
<organism>
    <name type="scientific">Streptococcus pneumoniae serotype 19F (strain G54)</name>
    <dbReference type="NCBI Taxonomy" id="512566"/>
    <lineage>
        <taxon>Bacteria</taxon>
        <taxon>Bacillati</taxon>
        <taxon>Bacillota</taxon>
        <taxon>Bacilli</taxon>
        <taxon>Lactobacillales</taxon>
        <taxon>Streptococcaceae</taxon>
        <taxon>Streptococcus</taxon>
    </lineage>
</organism>
<evidence type="ECO:0000255" key="1">
    <source>
        <dbReference type="HAMAP-Rule" id="MF_00514"/>
    </source>
</evidence>
<evidence type="ECO:0000256" key="2">
    <source>
        <dbReference type="SAM" id="MobiDB-lite"/>
    </source>
</evidence>
<evidence type="ECO:0000305" key="3"/>
<dbReference type="EMBL" id="CP001015">
    <property type="protein sequence ID" value="ACF54917.1"/>
    <property type="molecule type" value="Genomic_DNA"/>
</dbReference>
<dbReference type="SMR" id="B5E479"/>
<dbReference type="KEGG" id="spx:SPG_0884"/>
<dbReference type="HOGENOM" id="CLU_169643_3_0_9"/>
<dbReference type="GO" id="GO:0022625">
    <property type="term" value="C:cytosolic large ribosomal subunit"/>
    <property type="evidence" value="ECO:0007669"/>
    <property type="project" value="TreeGrafter"/>
</dbReference>
<dbReference type="GO" id="GO:0003735">
    <property type="term" value="F:structural constituent of ribosome"/>
    <property type="evidence" value="ECO:0007669"/>
    <property type="project" value="InterPro"/>
</dbReference>
<dbReference type="GO" id="GO:0006412">
    <property type="term" value="P:translation"/>
    <property type="evidence" value="ECO:0007669"/>
    <property type="project" value="UniProtKB-UniRule"/>
</dbReference>
<dbReference type="FunFam" id="4.10.410.60:FF:000001">
    <property type="entry name" value="50S ribosomal protein L35"/>
    <property type="match status" value="1"/>
</dbReference>
<dbReference type="Gene3D" id="4.10.410.60">
    <property type="match status" value="1"/>
</dbReference>
<dbReference type="HAMAP" id="MF_00514">
    <property type="entry name" value="Ribosomal_bL35"/>
    <property type="match status" value="1"/>
</dbReference>
<dbReference type="InterPro" id="IPR001706">
    <property type="entry name" value="Ribosomal_bL35"/>
</dbReference>
<dbReference type="InterPro" id="IPR021137">
    <property type="entry name" value="Ribosomal_bL35-like"/>
</dbReference>
<dbReference type="InterPro" id="IPR018265">
    <property type="entry name" value="Ribosomal_bL35_CS"/>
</dbReference>
<dbReference type="InterPro" id="IPR037229">
    <property type="entry name" value="Ribosomal_bL35_sf"/>
</dbReference>
<dbReference type="NCBIfam" id="TIGR00001">
    <property type="entry name" value="rpmI_bact"/>
    <property type="match status" value="1"/>
</dbReference>
<dbReference type="PANTHER" id="PTHR33343">
    <property type="entry name" value="54S RIBOSOMAL PROTEIN BL35M"/>
    <property type="match status" value="1"/>
</dbReference>
<dbReference type="PANTHER" id="PTHR33343:SF1">
    <property type="entry name" value="LARGE RIBOSOMAL SUBUNIT PROTEIN BL35M"/>
    <property type="match status" value="1"/>
</dbReference>
<dbReference type="Pfam" id="PF01632">
    <property type="entry name" value="Ribosomal_L35p"/>
    <property type="match status" value="1"/>
</dbReference>
<dbReference type="PRINTS" id="PR00064">
    <property type="entry name" value="RIBOSOMALL35"/>
</dbReference>
<dbReference type="SUPFAM" id="SSF143034">
    <property type="entry name" value="L35p-like"/>
    <property type="match status" value="1"/>
</dbReference>
<dbReference type="PROSITE" id="PS00936">
    <property type="entry name" value="RIBOSOMAL_L35"/>
    <property type="match status" value="1"/>
</dbReference>
<name>RL35_STRP4</name>
<reference key="1">
    <citation type="journal article" date="2001" name="Microb. Drug Resist.">
        <title>Annotated draft genomic sequence from a Streptococcus pneumoniae type 19F clinical isolate.</title>
        <authorList>
            <person name="Dopazo J."/>
            <person name="Mendoza A."/>
            <person name="Herrero J."/>
            <person name="Caldara F."/>
            <person name="Humbert Y."/>
            <person name="Friedli L."/>
            <person name="Guerrier M."/>
            <person name="Grand-Schenk E."/>
            <person name="Gandin C."/>
            <person name="de Francesco M."/>
            <person name="Polissi A."/>
            <person name="Buell G."/>
            <person name="Feger G."/>
            <person name="Garcia E."/>
            <person name="Peitsch M."/>
            <person name="Garcia-Bustos J.F."/>
        </authorList>
    </citation>
    <scope>NUCLEOTIDE SEQUENCE [LARGE SCALE GENOMIC DNA]</scope>
    <source>
        <strain>G54</strain>
    </source>
</reference>
<reference key="2">
    <citation type="submission" date="2008-03" db="EMBL/GenBank/DDBJ databases">
        <title>Pneumococcal beta glucoside metabolism investigated by whole genome comparison.</title>
        <authorList>
            <person name="Mulas L."/>
            <person name="Trappetti C."/>
            <person name="Hakenbeck R."/>
            <person name="Iannelli F."/>
            <person name="Pozzi G."/>
            <person name="Davidsen T.M."/>
            <person name="Tettelin H."/>
            <person name="Oggioni M."/>
        </authorList>
    </citation>
    <scope>NUCLEOTIDE SEQUENCE [LARGE SCALE GENOMIC DNA]</scope>
    <source>
        <strain>G54</strain>
    </source>
</reference>
<feature type="chain" id="PRO_1000127413" description="Large ribosomal subunit protein bL35">
    <location>
        <begin position="1"/>
        <end position="66"/>
    </location>
</feature>
<feature type="region of interest" description="Disordered" evidence="2">
    <location>
        <begin position="1"/>
        <end position="21"/>
    </location>
</feature>
<feature type="compositionally biased region" description="Basic residues" evidence="2">
    <location>
        <begin position="1"/>
        <end position="16"/>
    </location>
</feature>
<proteinExistence type="inferred from homology"/>
<keyword id="KW-0687">Ribonucleoprotein</keyword>
<keyword id="KW-0689">Ribosomal protein</keyword>
<accession>B5E479</accession>
<sequence length="66" mass="7836">MPKQKTHRASAKRFKRTGSGGLKRFRAYTSHRFHGKTKKQRRHLRKASMVHSGDYKRIKAMLTRLK</sequence>